<keyword id="KW-0963">Cytoplasm</keyword>
<keyword id="KW-0342">GTP-binding</keyword>
<keyword id="KW-0396">Initiation factor</keyword>
<keyword id="KW-0547">Nucleotide-binding</keyword>
<keyword id="KW-0648">Protein biosynthesis</keyword>
<comment type="function">
    <text evidence="2">One of the essential components for the initiation of protein synthesis. Protects formylmethionyl-tRNA from spontaneous hydrolysis and promotes its binding to the 30S ribosomal subunits. Also involved in the hydrolysis of GTP during the formation of the 70S ribosomal complex.</text>
</comment>
<comment type="subcellular location">
    <subcellularLocation>
        <location evidence="2">Cytoplasm</location>
    </subcellularLocation>
</comment>
<comment type="similarity">
    <text evidence="2">Belongs to the TRAFAC class translation factor GTPase superfamily. Classic translation factor GTPase family. IF-2 subfamily.</text>
</comment>
<reference key="1">
    <citation type="journal article" date="2006" name="Environ. Microbiol.">
        <title>Whole genome analysis of the marine Bacteroidetes'Gramella forsetii' reveals adaptations to degradation of polymeric organic matter.</title>
        <authorList>
            <person name="Bauer M."/>
            <person name="Kube M."/>
            <person name="Teeling H."/>
            <person name="Richter M."/>
            <person name="Lombardot T."/>
            <person name="Allers E."/>
            <person name="Wuerdemann C.A."/>
            <person name="Quast C."/>
            <person name="Kuhl H."/>
            <person name="Knaust F."/>
            <person name="Woebken D."/>
            <person name="Bischof K."/>
            <person name="Mussmann M."/>
            <person name="Choudhuri J.V."/>
            <person name="Meyer F."/>
            <person name="Reinhardt R."/>
            <person name="Amann R.I."/>
            <person name="Gloeckner F.O."/>
        </authorList>
    </citation>
    <scope>NUCLEOTIDE SEQUENCE [LARGE SCALE GENOMIC DNA]</scope>
    <source>
        <strain>DSM 17595 / CGMCC 1.15422 / KT0803</strain>
    </source>
</reference>
<accession>A0LXQ1</accession>
<feature type="chain" id="PRO_0000335474" description="Translation initiation factor IF-2">
    <location>
        <begin position="1"/>
        <end position="938"/>
    </location>
</feature>
<feature type="domain" description="tr-type G">
    <location>
        <begin position="434"/>
        <end position="602"/>
    </location>
</feature>
<feature type="region of interest" description="Disordered" evidence="3">
    <location>
        <begin position="57"/>
        <end position="350"/>
    </location>
</feature>
<feature type="region of interest" description="G1" evidence="1">
    <location>
        <begin position="443"/>
        <end position="450"/>
    </location>
</feature>
<feature type="region of interest" description="G2" evidence="1">
    <location>
        <begin position="468"/>
        <end position="472"/>
    </location>
</feature>
<feature type="region of interest" description="G3" evidence="1">
    <location>
        <begin position="490"/>
        <end position="493"/>
    </location>
</feature>
<feature type="region of interest" description="G4" evidence="1">
    <location>
        <begin position="544"/>
        <end position="547"/>
    </location>
</feature>
<feature type="region of interest" description="G5" evidence="1">
    <location>
        <begin position="580"/>
        <end position="582"/>
    </location>
</feature>
<feature type="compositionally biased region" description="Basic and acidic residues" evidence="3">
    <location>
        <begin position="57"/>
        <end position="205"/>
    </location>
</feature>
<feature type="compositionally biased region" description="Acidic residues" evidence="3">
    <location>
        <begin position="206"/>
        <end position="215"/>
    </location>
</feature>
<feature type="compositionally biased region" description="Basic and acidic residues" evidence="3">
    <location>
        <begin position="248"/>
        <end position="259"/>
    </location>
</feature>
<feature type="compositionally biased region" description="Basic residues" evidence="3">
    <location>
        <begin position="260"/>
        <end position="270"/>
    </location>
</feature>
<feature type="compositionally biased region" description="Basic residues" evidence="3">
    <location>
        <begin position="285"/>
        <end position="296"/>
    </location>
</feature>
<feature type="compositionally biased region" description="Basic and acidic residues" evidence="3">
    <location>
        <begin position="297"/>
        <end position="319"/>
    </location>
</feature>
<feature type="compositionally biased region" description="Basic residues" evidence="3">
    <location>
        <begin position="323"/>
        <end position="333"/>
    </location>
</feature>
<feature type="compositionally biased region" description="Basic and acidic residues" evidence="3">
    <location>
        <begin position="334"/>
        <end position="344"/>
    </location>
</feature>
<feature type="binding site" evidence="2">
    <location>
        <begin position="443"/>
        <end position="450"/>
    </location>
    <ligand>
        <name>GTP</name>
        <dbReference type="ChEBI" id="CHEBI:37565"/>
    </ligand>
</feature>
<feature type="binding site" evidence="2">
    <location>
        <begin position="490"/>
        <end position="494"/>
    </location>
    <ligand>
        <name>GTP</name>
        <dbReference type="ChEBI" id="CHEBI:37565"/>
    </ligand>
</feature>
<feature type="binding site" evidence="2">
    <location>
        <begin position="544"/>
        <end position="547"/>
    </location>
    <ligand>
        <name>GTP</name>
        <dbReference type="ChEBI" id="CHEBI:37565"/>
    </ligand>
</feature>
<evidence type="ECO:0000250" key="1"/>
<evidence type="ECO:0000255" key="2">
    <source>
        <dbReference type="HAMAP-Rule" id="MF_00100"/>
    </source>
</evidence>
<evidence type="ECO:0000256" key="3">
    <source>
        <dbReference type="SAM" id="MobiDB-lite"/>
    </source>
</evidence>
<gene>
    <name evidence="2" type="primary">infB</name>
    <name type="ordered locus">GFO_0158</name>
</gene>
<proteinExistence type="inferred from homology"/>
<dbReference type="EMBL" id="CU207366">
    <property type="protein sequence ID" value="CAL65146.1"/>
    <property type="molecule type" value="Genomic_DNA"/>
</dbReference>
<dbReference type="RefSeq" id="WP_011708084.1">
    <property type="nucleotide sequence ID" value="NC_008571.1"/>
</dbReference>
<dbReference type="SMR" id="A0LXQ1"/>
<dbReference type="STRING" id="411154.GFO_0158"/>
<dbReference type="KEGG" id="gfo:GFO_0158"/>
<dbReference type="eggNOG" id="COG0532">
    <property type="taxonomic scope" value="Bacteria"/>
</dbReference>
<dbReference type="HOGENOM" id="CLU_006301_0_1_10"/>
<dbReference type="OrthoDB" id="9811804at2"/>
<dbReference type="Proteomes" id="UP000000755">
    <property type="component" value="Chromosome"/>
</dbReference>
<dbReference type="GO" id="GO:0005737">
    <property type="term" value="C:cytoplasm"/>
    <property type="evidence" value="ECO:0007669"/>
    <property type="project" value="UniProtKB-SubCell"/>
</dbReference>
<dbReference type="GO" id="GO:0005525">
    <property type="term" value="F:GTP binding"/>
    <property type="evidence" value="ECO:0007669"/>
    <property type="project" value="UniProtKB-KW"/>
</dbReference>
<dbReference type="GO" id="GO:0003924">
    <property type="term" value="F:GTPase activity"/>
    <property type="evidence" value="ECO:0007669"/>
    <property type="project" value="UniProtKB-UniRule"/>
</dbReference>
<dbReference type="GO" id="GO:0003743">
    <property type="term" value="F:translation initiation factor activity"/>
    <property type="evidence" value="ECO:0007669"/>
    <property type="project" value="UniProtKB-UniRule"/>
</dbReference>
<dbReference type="CDD" id="cd01887">
    <property type="entry name" value="IF2_eIF5B"/>
    <property type="match status" value="1"/>
</dbReference>
<dbReference type="CDD" id="cd03702">
    <property type="entry name" value="IF2_mtIF2_II"/>
    <property type="match status" value="1"/>
</dbReference>
<dbReference type="CDD" id="cd03692">
    <property type="entry name" value="mtIF2_IVc"/>
    <property type="match status" value="1"/>
</dbReference>
<dbReference type="FunFam" id="2.40.30.10:FF:000007">
    <property type="entry name" value="Translation initiation factor IF-2"/>
    <property type="match status" value="1"/>
</dbReference>
<dbReference type="FunFam" id="2.40.30.10:FF:000008">
    <property type="entry name" value="Translation initiation factor IF-2"/>
    <property type="match status" value="1"/>
</dbReference>
<dbReference type="FunFam" id="3.40.50.10050:FF:000001">
    <property type="entry name" value="Translation initiation factor IF-2"/>
    <property type="match status" value="1"/>
</dbReference>
<dbReference type="FunFam" id="3.40.50.300:FF:000019">
    <property type="entry name" value="Translation initiation factor IF-2"/>
    <property type="match status" value="1"/>
</dbReference>
<dbReference type="Gene3D" id="3.40.50.300">
    <property type="entry name" value="P-loop containing nucleotide triphosphate hydrolases"/>
    <property type="match status" value="1"/>
</dbReference>
<dbReference type="Gene3D" id="2.40.30.10">
    <property type="entry name" value="Translation factors"/>
    <property type="match status" value="2"/>
</dbReference>
<dbReference type="Gene3D" id="3.40.50.10050">
    <property type="entry name" value="Translation initiation factor IF- 2, domain 3"/>
    <property type="match status" value="1"/>
</dbReference>
<dbReference type="HAMAP" id="MF_00100_B">
    <property type="entry name" value="IF_2_B"/>
    <property type="match status" value="1"/>
</dbReference>
<dbReference type="InterPro" id="IPR053905">
    <property type="entry name" value="EF-G-like_DII"/>
</dbReference>
<dbReference type="InterPro" id="IPR044145">
    <property type="entry name" value="IF2_II"/>
</dbReference>
<dbReference type="InterPro" id="IPR006847">
    <property type="entry name" value="IF2_N"/>
</dbReference>
<dbReference type="InterPro" id="IPR027417">
    <property type="entry name" value="P-loop_NTPase"/>
</dbReference>
<dbReference type="InterPro" id="IPR005225">
    <property type="entry name" value="Small_GTP-bd"/>
</dbReference>
<dbReference type="InterPro" id="IPR000795">
    <property type="entry name" value="T_Tr_GTP-bd_dom"/>
</dbReference>
<dbReference type="InterPro" id="IPR000178">
    <property type="entry name" value="TF_IF2_bacterial-like"/>
</dbReference>
<dbReference type="InterPro" id="IPR015760">
    <property type="entry name" value="TIF_IF2"/>
</dbReference>
<dbReference type="InterPro" id="IPR023115">
    <property type="entry name" value="TIF_IF2_dom3"/>
</dbReference>
<dbReference type="InterPro" id="IPR036925">
    <property type="entry name" value="TIF_IF2_dom3_sf"/>
</dbReference>
<dbReference type="InterPro" id="IPR009000">
    <property type="entry name" value="Transl_B-barrel_sf"/>
</dbReference>
<dbReference type="NCBIfam" id="TIGR00487">
    <property type="entry name" value="IF-2"/>
    <property type="match status" value="1"/>
</dbReference>
<dbReference type="NCBIfam" id="TIGR00231">
    <property type="entry name" value="small_GTP"/>
    <property type="match status" value="1"/>
</dbReference>
<dbReference type="PANTHER" id="PTHR43381:SF5">
    <property type="entry name" value="TR-TYPE G DOMAIN-CONTAINING PROTEIN"/>
    <property type="match status" value="1"/>
</dbReference>
<dbReference type="PANTHER" id="PTHR43381">
    <property type="entry name" value="TRANSLATION INITIATION FACTOR IF-2-RELATED"/>
    <property type="match status" value="1"/>
</dbReference>
<dbReference type="Pfam" id="PF22042">
    <property type="entry name" value="EF-G_D2"/>
    <property type="match status" value="1"/>
</dbReference>
<dbReference type="Pfam" id="PF00009">
    <property type="entry name" value="GTP_EFTU"/>
    <property type="match status" value="1"/>
</dbReference>
<dbReference type="Pfam" id="PF11987">
    <property type="entry name" value="IF-2"/>
    <property type="match status" value="1"/>
</dbReference>
<dbReference type="Pfam" id="PF04760">
    <property type="entry name" value="IF2_N"/>
    <property type="match status" value="1"/>
</dbReference>
<dbReference type="SUPFAM" id="SSF52156">
    <property type="entry name" value="Initiation factor IF2/eIF5b, domain 3"/>
    <property type="match status" value="1"/>
</dbReference>
<dbReference type="SUPFAM" id="SSF52540">
    <property type="entry name" value="P-loop containing nucleoside triphosphate hydrolases"/>
    <property type="match status" value="1"/>
</dbReference>
<dbReference type="SUPFAM" id="SSF50447">
    <property type="entry name" value="Translation proteins"/>
    <property type="match status" value="2"/>
</dbReference>
<dbReference type="PROSITE" id="PS51722">
    <property type="entry name" value="G_TR_2"/>
    <property type="match status" value="1"/>
</dbReference>
<dbReference type="PROSITE" id="PS01176">
    <property type="entry name" value="IF2"/>
    <property type="match status" value="1"/>
</dbReference>
<organism>
    <name type="scientific">Christiangramia forsetii (strain DSM 17595 / CGMCC 1.15422 / KT0803)</name>
    <name type="common">Gramella forsetii</name>
    <dbReference type="NCBI Taxonomy" id="411154"/>
    <lineage>
        <taxon>Bacteria</taxon>
        <taxon>Pseudomonadati</taxon>
        <taxon>Bacteroidota</taxon>
        <taxon>Flavobacteriia</taxon>
        <taxon>Flavobacteriales</taxon>
        <taxon>Flavobacteriaceae</taxon>
        <taxon>Christiangramia</taxon>
    </lineage>
</organism>
<sequence length="938" mass="104312">MAEAKTTRLNKVLREFNISLDRAVEYLTSKGYEIDARPTTKISGEIYEVLSDEFETDKSKKVASKEVGEERKKEKEELRKEIEEKRKADEEKKEEAVSSRAKLEGPKTVGKIDLDKKPGEKSKEKEAEAPKEKEKEKETPAKEPVKKAEESKPTEKPAEKVEEKEDKPKEEKKAEPKKEEAKPQEAKAEKTKSEEPKSEETKSEETTEGGESEEKESDRIETKYTKLNGPNFTGKKIDLSQFKKPVKKKEEKKEDDKKDKDRRKKRRRRISKDVKGGGGNNQRGGAKKGGRTRSKPITKEEPTEEEVQKQVRETLEKLQGKSSKGKGAKYRRQKRDEHRQRSADDLAQQESDDKILKVTEFVTVSEVATMMDVQVTQIISACMSLGMMVTMNQRLDAETLTIVAEEFDYEVEFTTADVEETVEEVEENPEDLVTRAPIVTVMGHVDHGKTSLLDYVRKENVIAGESGGITQHIGAYGVKLEGGQKIAFLDTPGHEAFTAMRARGAQVTDIAIIVIAADDDVMPQTKEAISHAQAAGVPIIFAINKSDLPTANPEKIKEKLAAMNLLVEDWGGKIQSHDISAKTGAGVKELLEKVLLEAEILELKANPKKLAKGTVVEAFLDKGRGYIATILVQAGTLKIGDYVLAGRNSGKIKAMHDERGHEVKEAGPSTPVSILGLDGAPQAGDTFKVMEDEREAKDIAARRTQLQREQNVRTQRHITLDEIGRRIALGDFKELNIILKGDVDGSVEALTDSFQKLSTEEIQVNIIHKGVGAITESDVLLASASDAVIIGFNVRPAGNARQVADKEEIDIRTYSIIYDAINDLKDAMEGMLSPELKEEITGTAEIRETFKISKIGTIAGCMVTSGTIYRSAGVRLIRDGVVVYTGELSSLKRFKDDVREVKKGYDCGMQVKNYNDIREGDVIEAFREVEVKKTLKSK</sequence>
<protein>
    <recommendedName>
        <fullName evidence="2">Translation initiation factor IF-2</fullName>
    </recommendedName>
</protein>
<name>IF2_CHRFK</name>